<feature type="chain" id="PRO_0000267204" description="Thioredoxin">
    <location>
        <begin position="1"/>
        <end position="104"/>
    </location>
</feature>
<feature type="domain" description="Thioredoxin" evidence="2">
    <location>
        <begin position="2"/>
        <end position="104"/>
    </location>
</feature>
<feature type="disulfide bond" description="Redox-active" evidence="2">
    <location>
        <begin position="29"/>
        <end position="32"/>
    </location>
</feature>
<comment type="function">
    <text evidence="1">Component of the thioredoxin-thioredoxin reductase system. Participates in various redox reactions through the reversible oxidation of its active center dithiol to a disulfide and catalyzes dithiol-disulfide exchange reactions (By similarity).</text>
</comment>
<comment type="similarity">
    <text evidence="3">Belongs to the thioredoxin family.</text>
</comment>
<accession>Q2YXD0</accession>
<evidence type="ECO:0000250" key="1"/>
<evidence type="ECO:0000255" key="2">
    <source>
        <dbReference type="PROSITE-ProRule" id="PRU00691"/>
    </source>
</evidence>
<evidence type="ECO:0000305" key="3"/>
<name>THIO_STAAB</name>
<dbReference type="EMBL" id="AJ938182">
    <property type="protein sequence ID" value="CAI80697.1"/>
    <property type="molecule type" value="Genomic_DNA"/>
</dbReference>
<dbReference type="RefSeq" id="WP_001018928.1">
    <property type="nucleotide sequence ID" value="NC_007622.1"/>
</dbReference>
<dbReference type="SMR" id="Q2YXD0"/>
<dbReference type="GeneID" id="98345462"/>
<dbReference type="KEGG" id="sab:SAB1009"/>
<dbReference type="HOGENOM" id="CLU_090389_10_2_9"/>
<dbReference type="GO" id="GO:0005829">
    <property type="term" value="C:cytosol"/>
    <property type="evidence" value="ECO:0007669"/>
    <property type="project" value="TreeGrafter"/>
</dbReference>
<dbReference type="GO" id="GO:0015035">
    <property type="term" value="F:protein-disulfide reductase activity"/>
    <property type="evidence" value="ECO:0007669"/>
    <property type="project" value="InterPro"/>
</dbReference>
<dbReference type="GO" id="GO:0045454">
    <property type="term" value="P:cell redox homeostasis"/>
    <property type="evidence" value="ECO:0007669"/>
    <property type="project" value="TreeGrafter"/>
</dbReference>
<dbReference type="CDD" id="cd02947">
    <property type="entry name" value="TRX_family"/>
    <property type="match status" value="1"/>
</dbReference>
<dbReference type="FunFam" id="3.40.30.10:FF:000001">
    <property type="entry name" value="Thioredoxin"/>
    <property type="match status" value="1"/>
</dbReference>
<dbReference type="Gene3D" id="3.40.30.10">
    <property type="entry name" value="Glutaredoxin"/>
    <property type="match status" value="1"/>
</dbReference>
<dbReference type="InterPro" id="IPR005746">
    <property type="entry name" value="Thioredoxin"/>
</dbReference>
<dbReference type="InterPro" id="IPR036249">
    <property type="entry name" value="Thioredoxin-like_sf"/>
</dbReference>
<dbReference type="InterPro" id="IPR017937">
    <property type="entry name" value="Thioredoxin_CS"/>
</dbReference>
<dbReference type="InterPro" id="IPR013766">
    <property type="entry name" value="Thioredoxin_domain"/>
</dbReference>
<dbReference type="NCBIfam" id="TIGR01068">
    <property type="entry name" value="thioredoxin"/>
    <property type="match status" value="1"/>
</dbReference>
<dbReference type="PANTHER" id="PTHR45663">
    <property type="entry name" value="GEO12009P1"/>
    <property type="match status" value="1"/>
</dbReference>
<dbReference type="PANTHER" id="PTHR45663:SF11">
    <property type="entry name" value="GEO12009P1"/>
    <property type="match status" value="1"/>
</dbReference>
<dbReference type="Pfam" id="PF00085">
    <property type="entry name" value="Thioredoxin"/>
    <property type="match status" value="1"/>
</dbReference>
<dbReference type="PIRSF" id="PIRSF000077">
    <property type="entry name" value="Thioredoxin"/>
    <property type="match status" value="1"/>
</dbReference>
<dbReference type="PRINTS" id="PR00421">
    <property type="entry name" value="THIOREDOXIN"/>
</dbReference>
<dbReference type="SUPFAM" id="SSF52833">
    <property type="entry name" value="Thioredoxin-like"/>
    <property type="match status" value="1"/>
</dbReference>
<dbReference type="PROSITE" id="PS00194">
    <property type="entry name" value="THIOREDOXIN_1"/>
    <property type="match status" value="1"/>
</dbReference>
<dbReference type="PROSITE" id="PS51352">
    <property type="entry name" value="THIOREDOXIN_2"/>
    <property type="match status" value="1"/>
</dbReference>
<sequence>MAIVKVTDADFDSKVESGVQLVDFWATWCGPCKMIAPVLEELAADYEGKADILKLDVDENPSTAAKYEVMSIPTLIVFKDGQPVDKVVGFQPKENLAEVLDKHL</sequence>
<reference key="1">
    <citation type="journal article" date="2007" name="PLoS ONE">
        <title>Molecular correlates of host specialization in Staphylococcus aureus.</title>
        <authorList>
            <person name="Herron-Olson L."/>
            <person name="Fitzgerald J.R."/>
            <person name="Musser J.M."/>
            <person name="Kapur V."/>
        </authorList>
    </citation>
    <scope>NUCLEOTIDE SEQUENCE [LARGE SCALE GENOMIC DNA]</scope>
    <source>
        <strain>bovine RF122 / ET3-1</strain>
    </source>
</reference>
<protein>
    <recommendedName>
        <fullName>Thioredoxin</fullName>
        <shortName>Trx</shortName>
    </recommendedName>
</protein>
<keyword id="KW-1015">Disulfide bond</keyword>
<keyword id="KW-0249">Electron transport</keyword>
<keyword id="KW-0676">Redox-active center</keyword>
<keyword id="KW-0813">Transport</keyword>
<organism>
    <name type="scientific">Staphylococcus aureus (strain bovine RF122 / ET3-1)</name>
    <dbReference type="NCBI Taxonomy" id="273036"/>
    <lineage>
        <taxon>Bacteria</taxon>
        <taxon>Bacillati</taxon>
        <taxon>Bacillota</taxon>
        <taxon>Bacilli</taxon>
        <taxon>Bacillales</taxon>
        <taxon>Staphylococcaceae</taxon>
        <taxon>Staphylococcus</taxon>
    </lineage>
</organism>
<proteinExistence type="inferred from homology"/>
<gene>
    <name type="primary">trxA</name>
    <name type="ordered locus">SAB1009</name>
</gene>